<protein>
    <recommendedName>
        <fullName evidence="1">Large ribosomal subunit protein uL14</fullName>
    </recommendedName>
    <alternativeName>
        <fullName evidence="2">50S ribosomal protein L14</fullName>
    </alternativeName>
</protein>
<sequence>MIQMQTNLDVADNSGARRVQCIKVLGGSHRRYAGIGDIIKVTVKEAIPRGKVKKGDVLNAVVVRTRKGVRRADGSTIRFDGNAAVMLNANKQPIGTRIFGPVTRELRSENFMKIISLAPEVL</sequence>
<proteinExistence type="inferred from homology"/>
<name>RL14_ALTMD</name>
<keyword id="KW-0687">Ribonucleoprotein</keyword>
<keyword id="KW-0689">Ribosomal protein</keyword>
<keyword id="KW-0694">RNA-binding</keyword>
<keyword id="KW-0699">rRNA-binding</keyword>
<dbReference type="EMBL" id="CP001103">
    <property type="protein sequence ID" value="AEA98936.1"/>
    <property type="molecule type" value="Genomic_DNA"/>
</dbReference>
<dbReference type="RefSeq" id="WP_012519228.1">
    <property type="nucleotide sequence ID" value="NC_011138.3"/>
</dbReference>
<dbReference type="SMR" id="B4RT38"/>
<dbReference type="GeneID" id="56343836"/>
<dbReference type="KEGG" id="amc:MADE_1014010"/>
<dbReference type="HOGENOM" id="CLU_095071_2_1_6"/>
<dbReference type="Proteomes" id="UP000001870">
    <property type="component" value="Chromosome"/>
</dbReference>
<dbReference type="GO" id="GO:0022625">
    <property type="term" value="C:cytosolic large ribosomal subunit"/>
    <property type="evidence" value="ECO:0007669"/>
    <property type="project" value="TreeGrafter"/>
</dbReference>
<dbReference type="GO" id="GO:0070180">
    <property type="term" value="F:large ribosomal subunit rRNA binding"/>
    <property type="evidence" value="ECO:0007669"/>
    <property type="project" value="TreeGrafter"/>
</dbReference>
<dbReference type="GO" id="GO:0003735">
    <property type="term" value="F:structural constituent of ribosome"/>
    <property type="evidence" value="ECO:0007669"/>
    <property type="project" value="InterPro"/>
</dbReference>
<dbReference type="GO" id="GO:0006412">
    <property type="term" value="P:translation"/>
    <property type="evidence" value="ECO:0007669"/>
    <property type="project" value="UniProtKB-UniRule"/>
</dbReference>
<dbReference type="CDD" id="cd00337">
    <property type="entry name" value="Ribosomal_uL14"/>
    <property type="match status" value="1"/>
</dbReference>
<dbReference type="FunFam" id="2.40.150.20:FF:000001">
    <property type="entry name" value="50S ribosomal protein L14"/>
    <property type="match status" value="1"/>
</dbReference>
<dbReference type="Gene3D" id="2.40.150.20">
    <property type="entry name" value="Ribosomal protein L14"/>
    <property type="match status" value="1"/>
</dbReference>
<dbReference type="HAMAP" id="MF_01367">
    <property type="entry name" value="Ribosomal_uL14"/>
    <property type="match status" value="1"/>
</dbReference>
<dbReference type="InterPro" id="IPR000218">
    <property type="entry name" value="Ribosomal_uL14"/>
</dbReference>
<dbReference type="InterPro" id="IPR005745">
    <property type="entry name" value="Ribosomal_uL14_bac-type"/>
</dbReference>
<dbReference type="InterPro" id="IPR036853">
    <property type="entry name" value="Ribosomal_uL14_sf"/>
</dbReference>
<dbReference type="NCBIfam" id="TIGR01067">
    <property type="entry name" value="rplN_bact"/>
    <property type="match status" value="1"/>
</dbReference>
<dbReference type="PANTHER" id="PTHR11761">
    <property type="entry name" value="50S/60S RIBOSOMAL PROTEIN L14/L23"/>
    <property type="match status" value="1"/>
</dbReference>
<dbReference type="PANTHER" id="PTHR11761:SF3">
    <property type="entry name" value="LARGE RIBOSOMAL SUBUNIT PROTEIN UL14M"/>
    <property type="match status" value="1"/>
</dbReference>
<dbReference type="Pfam" id="PF00238">
    <property type="entry name" value="Ribosomal_L14"/>
    <property type="match status" value="1"/>
</dbReference>
<dbReference type="SMART" id="SM01374">
    <property type="entry name" value="Ribosomal_L14"/>
    <property type="match status" value="1"/>
</dbReference>
<dbReference type="SUPFAM" id="SSF50193">
    <property type="entry name" value="Ribosomal protein L14"/>
    <property type="match status" value="1"/>
</dbReference>
<gene>
    <name evidence="1" type="primary">rplN</name>
    <name type="ordered locus">MADE_1014010</name>
</gene>
<accession>B4RT38</accession>
<accession>F2GAK2</accession>
<organism>
    <name type="scientific">Alteromonas mediterranea (strain DSM 17117 / CIP 110805 / LMG 28347 / Deep ecotype)</name>
    <dbReference type="NCBI Taxonomy" id="1774373"/>
    <lineage>
        <taxon>Bacteria</taxon>
        <taxon>Pseudomonadati</taxon>
        <taxon>Pseudomonadota</taxon>
        <taxon>Gammaproteobacteria</taxon>
        <taxon>Alteromonadales</taxon>
        <taxon>Alteromonadaceae</taxon>
        <taxon>Alteromonas/Salinimonas group</taxon>
        <taxon>Alteromonas</taxon>
    </lineage>
</organism>
<evidence type="ECO:0000255" key="1">
    <source>
        <dbReference type="HAMAP-Rule" id="MF_01367"/>
    </source>
</evidence>
<evidence type="ECO:0000305" key="2"/>
<comment type="function">
    <text evidence="1">Binds to 23S rRNA. Forms part of two intersubunit bridges in the 70S ribosome.</text>
</comment>
<comment type="subunit">
    <text evidence="1">Part of the 50S ribosomal subunit. Forms a cluster with proteins L3 and L19. In the 70S ribosome, L14 and L19 interact and together make contacts with the 16S rRNA in bridges B5 and B8.</text>
</comment>
<comment type="similarity">
    <text evidence="1">Belongs to the universal ribosomal protein uL14 family.</text>
</comment>
<reference key="1">
    <citation type="journal article" date="2008" name="ISME J.">
        <title>Comparative genomics of two ecotypes of the marine planktonic copiotroph Alteromonas macleodii suggests alternative lifestyles associated with different kinds of particulate organic matter.</title>
        <authorList>
            <person name="Ivars-Martinez E."/>
            <person name="Martin-Cuadrado A.-B."/>
            <person name="D'Auria G."/>
            <person name="Mira A."/>
            <person name="Ferriera S."/>
            <person name="Johnson J."/>
            <person name="Friedman R."/>
            <person name="Rodriguez-Valera F."/>
        </authorList>
    </citation>
    <scope>NUCLEOTIDE SEQUENCE [LARGE SCALE GENOMIC DNA]</scope>
    <source>
        <strain>DSM 17117 / CIP 110805 / LMG 28347 / Deep ecotype</strain>
    </source>
</reference>
<feature type="chain" id="PRO_1000144215" description="Large ribosomal subunit protein uL14">
    <location>
        <begin position="1"/>
        <end position="122"/>
    </location>
</feature>